<accession>P36123</accession>
<accession>D6VX93</accession>
<organism>
    <name type="scientific">Saccharomyces cerevisiae (strain ATCC 204508 / S288c)</name>
    <name type="common">Baker's yeast</name>
    <dbReference type="NCBI Taxonomy" id="559292"/>
    <lineage>
        <taxon>Eukaryota</taxon>
        <taxon>Fungi</taxon>
        <taxon>Dikarya</taxon>
        <taxon>Ascomycota</taxon>
        <taxon>Saccharomycotina</taxon>
        <taxon>Saccharomycetes</taxon>
        <taxon>Saccharomycetales</taxon>
        <taxon>Saccharomycetaceae</taxon>
        <taxon>Saccharomyces</taxon>
    </lineage>
</organism>
<gene>
    <name type="primary">SAP190</name>
    <name type="ordered locus">YKR028W</name>
</gene>
<comment type="function">
    <text evidence="2 3">Positive regulator of protein phosphatase SIT4. Involved in the general amino acid control (GAAC) response regulated by TOR. Involved in the dephosphorylation of the elongator complex subunit IKI3.</text>
</comment>
<comment type="subunit">
    <text>Associates with the SIT4 protein phosphatase catalytic subunit in a cell-cycle-dependent manner.</text>
</comment>
<comment type="interaction">
    <interactant intactId="EBI-16392">
        <id>P36123</id>
    </interactant>
    <interactant intactId="EBI-13707">
        <id>P20604</id>
        <label>SIT4</label>
    </interactant>
    <organismsDiffer>false</organismsDiffer>
    <experiments>4</experiments>
</comment>
<comment type="subcellular location">
    <subcellularLocation>
        <location evidence="4">Cytoplasm</location>
    </subcellularLocation>
</comment>
<comment type="PTM">
    <text>Hyperphosphorylated in the absence of SIT4.</text>
</comment>
<comment type="similarity">
    <text evidence="4">Belongs to the SAPS family.</text>
</comment>
<comment type="sequence caution" evidence="4">
    <conflict type="frameshift">
        <sequence resource="EMBL-CDS" id="CAA82100"/>
    </conflict>
</comment>
<keyword id="KW-0131">Cell cycle</keyword>
<keyword id="KW-0963">Cytoplasm</keyword>
<keyword id="KW-0597">Phosphoprotein</keyword>
<keyword id="KW-1185">Reference proteome</keyword>
<protein>
    <recommendedName>
        <fullName>SIT4-associating protein SAP190</fullName>
    </recommendedName>
</protein>
<feature type="chain" id="PRO_0000046107" description="SIT4-associating protein SAP190">
    <location>
        <begin position="1"/>
        <end position="1033"/>
    </location>
</feature>
<feature type="region of interest" description="Disordered" evidence="1">
    <location>
        <begin position="32"/>
        <end position="82"/>
    </location>
</feature>
<feature type="region of interest" description="Disordered" evidence="1">
    <location>
        <begin position="147"/>
        <end position="213"/>
    </location>
</feature>
<feature type="region of interest" description="Disordered" evidence="1">
    <location>
        <begin position="768"/>
        <end position="1033"/>
    </location>
</feature>
<feature type="compositionally biased region" description="Basic and acidic residues" evidence="1">
    <location>
        <begin position="158"/>
        <end position="170"/>
    </location>
</feature>
<feature type="compositionally biased region" description="Acidic residues" evidence="1">
    <location>
        <begin position="171"/>
        <end position="182"/>
    </location>
</feature>
<feature type="compositionally biased region" description="Basic and acidic residues" evidence="1">
    <location>
        <begin position="183"/>
        <end position="195"/>
    </location>
</feature>
<feature type="compositionally biased region" description="Acidic residues" evidence="1">
    <location>
        <begin position="784"/>
        <end position="793"/>
    </location>
</feature>
<feature type="compositionally biased region" description="Acidic residues" evidence="1">
    <location>
        <begin position="825"/>
        <end position="838"/>
    </location>
</feature>
<feature type="compositionally biased region" description="Basic and acidic residues" evidence="1">
    <location>
        <begin position="858"/>
        <end position="879"/>
    </location>
</feature>
<feature type="compositionally biased region" description="Polar residues" evidence="1">
    <location>
        <begin position="909"/>
        <end position="924"/>
    </location>
</feature>
<feature type="compositionally biased region" description="Acidic residues" evidence="1">
    <location>
        <begin position="932"/>
        <end position="944"/>
    </location>
</feature>
<feature type="compositionally biased region" description="Acidic residues" evidence="1">
    <location>
        <begin position="1000"/>
        <end position="1018"/>
    </location>
</feature>
<feature type="modified residue" description="Phosphoserine" evidence="5 6 7">
    <location>
        <position position="774"/>
    </location>
</feature>
<feature type="modified residue" description="Phosphoserine" evidence="5 7">
    <location>
        <position position="857"/>
    </location>
</feature>
<feature type="modified residue" description="Phosphoserine" evidence="7">
    <location>
        <position position="862"/>
    </location>
</feature>
<feature type="modified residue" description="Phosphoserine" evidence="7">
    <location>
        <position position="892"/>
    </location>
</feature>
<feature type="modified residue" description="Phosphothreonine" evidence="7">
    <location>
        <position position="990"/>
    </location>
</feature>
<feature type="modified residue" description="Phosphoserine" evidence="7">
    <location>
        <position position="991"/>
    </location>
</feature>
<name>SA190_YEAST</name>
<sequence length="1033" mass="117098">MSGSFWKFGQDYSIESPVSKILNSAFIKINKDQDDDVPTGTCEENIADDEDNSSHDYAASEDNVVNENEEKEEENTLPTTESEYENYRPNLDVLDDLLDDDELYTELMCSNFKLLIFLKYPDVLSKLIEYVTNEKILDEETDSAKKPEIIEGVNDHPILIERDRKDKKEDAEEGGDSEETTNDSDHDSGDERSVDSEETSITLPPESEEQVETRRARIAAEILSADVWPISAAIMQNKDLLGRLWSILDHPAPLPIPASTYFMKINERLLDMDITGMLEFILSRDSLVARFLTHVDNPSLMDFLLKVISTDKPDSPTGVIKILKSQELIPKLLDHLNPEYGISTQSAAGDFIKAFVTLSTNSSNELASGIGPNELTRQLVSEEMIEKLIKIMLKGGTSLSNGVGIIIELIRKNNSDYDFIQLVYTTLESHPPTDRDPIHLIHLVKLFAKHMPDFADMLDKTKLPLMEMPFGNIEPLGFERFKICELIAELLHCSNMTLLNEPNGEMIAQERDIERAKELETSTEKENITAIVDNKSSYYDKDCVEKDITENLGALQINNQGSEEDELNDTGVSSVKLDVKSDAKVVEGLENDASGVELYDETLSDTESVRECLREKPLVGDRLKIALEDTKILISILDMFTEFPWNNFLHNVIFDIAQQIFNGPLKTGYNRFLLKDYLVDAYLTKKIVDADKACQDYEKKTGLRYGYMGHLTLVAEEISKFKEYIDEMKLTFCNTAVSDRLEEPFWKEYSETILADTREKYNTVLGDFGNDQESDDDVIRNSDSEDIIGDTEGNENYGNGENDELLSNGHDSGNMDLYYNFNNNENEENEEDYAEYSDVDNKNYYNNVETNDDDYDSDDGKSKSAESEFTDKISEHRDGNSLYNEDNDENGSDKWTSGTSLFPPDHFPSRSQPSDPKLQDQNIFHHQFDFEGVGDDDDYMDPNDDGQSYARPGNPLYTTPKTPPRPKTILFNSLSALDNNGEDEEVALGTSVDDRMDNEISSDEEDSEDEDEENDMGNEEGYSLYRSRSKEAF</sequence>
<proteinExistence type="evidence at protein level"/>
<dbReference type="EMBL" id="U50561">
    <property type="protein sequence ID" value="AAC49304.1"/>
    <property type="molecule type" value="Genomic_DNA"/>
</dbReference>
<dbReference type="EMBL" id="Z28253">
    <property type="protein sequence ID" value="CAA82100.1"/>
    <property type="status" value="ALT_FRAME"/>
    <property type="molecule type" value="Genomic_DNA"/>
</dbReference>
<dbReference type="EMBL" id="BK006944">
    <property type="protein sequence ID" value="DAA09183.2"/>
    <property type="molecule type" value="Genomic_DNA"/>
</dbReference>
<dbReference type="PIR" id="S38100">
    <property type="entry name" value="S38100"/>
</dbReference>
<dbReference type="RefSeq" id="NP_012953.2">
    <property type="nucleotide sequence ID" value="NM_001179818.2"/>
</dbReference>
<dbReference type="BioGRID" id="34161">
    <property type="interactions" value="344"/>
</dbReference>
<dbReference type="ComplexPortal" id="CPX-1866">
    <property type="entry name" value="SIT4-SAP190 phosphatase complex"/>
</dbReference>
<dbReference type="DIP" id="DIP-4850N"/>
<dbReference type="FunCoup" id="P36123">
    <property type="interactions" value="895"/>
</dbReference>
<dbReference type="IntAct" id="P36123">
    <property type="interactions" value="17"/>
</dbReference>
<dbReference type="MINT" id="P36123"/>
<dbReference type="STRING" id="4932.YKR028W"/>
<dbReference type="GlyGen" id="P36123">
    <property type="glycosylation" value="2 sites, 1 O-linked glycan (2 sites)"/>
</dbReference>
<dbReference type="iPTMnet" id="P36123"/>
<dbReference type="PaxDb" id="4932-YKR028W"/>
<dbReference type="PeptideAtlas" id="P36123"/>
<dbReference type="EnsemblFungi" id="YKR028W_mRNA">
    <property type="protein sequence ID" value="YKR028W"/>
    <property type="gene ID" value="YKR028W"/>
</dbReference>
<dbReference type="GeneID" id="853899"/>
<dbReference type="KEGG" id="sce:YKR028W"/>
<dbReference type="AGR" id="SGD:S000001736"/>
<dbReference type="SGD" id="S000001736">
    <property type="gene designation" value="SAP190"/>
</dbReference>
<dbReference type="VEuPathDB" id="FungiDB:YKR028W"/>
<dbReference type="eggNOG" id="KOG2073">
    <property type="taxonomic scope" value="Eukaryota"/>
</dbReference>
<dbReference type="GeneTree" id="ENSGT00390000009899"/>
<dbReference type="HOGENOM" id="CLU_003676_2_0_1"/>
<dbReference type="InParanoid" id="P36123"/>
<dbReference type="OMA" id="HAYIACE"/>
<dbReference type="OrthoDB" id="295029at2759"/>
<dbReference type="BioCyc" id="YEAST:G3O-32004-MONOMER"/>
<dbReference type="Reactome" id="R-SCE-204005">
    <property type="pathway name" value="COPII-mediated vesicle transport"/>
</dbReference>
<dbReference type="BioGRID-ORCS" id="853899">
    <property type="hits" value="0 hits in 10 CRISPR screens"/>
</dbReference>
<dbReference type="PRO" id="PR:P36123"/>
<dbReference type="Proteomes" id="UP000002311">
    <property type="component" value="Chromosome XI"/>
</dbReference>
<dbReference type="RNAct" id="P36123">
    <property type="molecule type" value="protein"/>
</dbReference>
<dbReference type="GO" id="GO:0005829">
    <property type="term" value="C:cytosol"/>
    <property type="evidence" value="ECO:0000318"/>
    <property type="project" value="GO_Central"/>
</dbReference>
<dbReference type="GO" id="GO:0005634">
    <property type="term" value="C:nucleus"/>
    <property type="evidence" value="ECO:0000318"/>
    <property type="project" value="GO_Central"/>
</dbReference>
<dbReference type="GO" id="GO:0008287">
    <property type="term" value="C:protein serine/threonine phosphatase complex"/>
    <property type="evidence" value="ECO:0000353"/>
    <property type="project" value="ComplexPortal"/>
</dbReference>
<dbReference type="GO" id="GO:0019903">
    <property type="term" value="F:protein phosphatase binding"/>
    <property type="evidence" value="ECO:0007669"/>
    <property type="project" value="InterPro"/>
</dbReference>
<dbReference type="GO" id="GO:0019888">
    <property type="term" value="F:protein phosphatase regulator activity"/>
    <property type="evidence" value="ECO:0000318"/>
    <property type="project" value="GO_Central"/>
</dbReference>
<dbReference type="GO" id="GO:0000082">
    <property type="term" value="P:G1/S transition of mitotic cell cycle"/>
    <property type="evidence" value="ECO:0000315"/>
    <property type="project" value="SGD"/>
</dbReference>
<dbReference type="GO" id="GO:0009966">
    <property type="term" value="P:regulation of signal transduction"/>
    <property type="evidence" value="ECO:0000318"/>
    <property type="project" value="GO_Central"/>
</dbReference>
<dbReference type="GO" id="GO:0031929">
    <property type="term" value="P:TOR signaling"/>
    <property type="evidence" value="ECO:0000315"/>
    <property type="project" value="SGD"/>
</dbReference>
<dbReference type="GO" id="GO:0002098">
    <property type="term" value="P:tRNA wobble uridine modification"/>
    <property type="evidence" value="ECO:0000316"/>
    <property type="project" value="SGD"/>
</dbReference>
<dbReference type="InterPro" id="IPR007587">
    <property type="entry name" value="SAPS"/>
</dbReference>
<dbReference type="PANTHER" id="PTHR12634:SF8">
    <property type="entry name" value="FIERY MOUNTAIN, ISOFORM D"/>
    <property type="match status" value="1"/>
</dbReference>
<dbReference type="PANTHER" id="PTHR12634">
    <property type="entry name" value="SIT4 YEAST -ASSOCIATING PROTEIN-RELATED"/>
    <property type="match status" value="1"/>
</dbReference>
<dbReference type="Pfam" id="PF04499">
    <property type="entry name" value="SAPS"/>
    <property type="match status" value="1"/>
</dbReference>
<evidence type="ECO:0000256" key="1">
    <source>
        <dbReference type="SAM" id="MobiDB-lite"/>
    </source>
</evidence>
<evidence type="ECO:0000269" key="2">
    <source>
    </source>
</evidence>
<evidence type="ECO:0000269" key="3">
    <source>
    </source>
</evidence>
<evidence type="ECO:0000305" key="4"/>
<evidence type="ECO:0007744" key="5">
    <source>
    </source>
</evidence>
<evidence type="ECO:0007744" key="6">
    <source>
    </source>
</evidence>
<evidence type="ECO:0007744" key="7">
    <source>
    </source>
</evidence>
<reference key="1">
    <citation type="journal article" date="1996" name="Mol. Cell. Biol.">
        <title>The SAPs, a new family of proteins, associate and function positively with the SIT4 phosphatase.</title>
        <authorList>
            <person name="Luke M.M."/>
            <person name="della Seta F."/>
            <person name="di Como C.J."/>
            <person name="Sugimoto H."/>
            <person name="Kobayashi R."/>
            <person name="Arndt K.T."/>
        </authorList>
    </citation>
    <scope>NUCLEOTIDE SEQUENCE [GENOMIC DNA]</scope>
    <scope>IDENTIFICATION OF FRAMESHIFT</scope>
    <scope>INTERACTION WITH SIT4</scope>
    <scope>PHOSPHORYLATION</scope>
    <source>
        <strain>S288c / GRF88</strain>
    </source>
</reference>
<reference key="2">
    <citation type="journal article" date="1994" name="Nature">
        <title>Complete DNA sequence of yeast chromosome XI.</title>
        <authorList>
            <person name="Dujon B."/>
            <person name="Alexandraki D."/>
            <person name="Andre B."/>
            <person name="Ansorge W."/>
            <person name="Baladron V."/>
            <person name="Ballesta J.P.G."/>
            <person name="Banrevi A."/>
            <person name="Bolle P.-A."/>
            <person name="Bolotin-Fukuhara M."/>
            <person name="Bossier P."/>
            <person name="Bou G."/>
            <person name="Boyer J."/>
            <person name="Buitrago M.J."/>
            <person name="Cheret G."/>
            <person name="Colleaux L."/>
            <person name="Daignan-Fornier B."/>
            <person name="del Rey F."/>
            <person name="Dion C."/>
            <person name="Domdey H."/>
            <person name="Duesterhoeft A."/>
            <person name="Duesterhus S."/>
            <person name="Entian K.-D."/>
            <person name="Erfle H."/>
            <person name="Esteban P.F."/>
            <person name="Feldmann H."/>
            <person name="Fernandes L."/>
            <person name="Fobo G.M."/>
            <person name="Fritz C."/>
            <person name="Fukuhara H."/>
            <person name="Gabel C."/>
            <person name="Gaillon L."/>
            <person name="Garcia-Cantalejo J.M."/>
            <person name="Garcia-Ramirez J.J."/>
            <person name="Gent M.E."/>
            <person name="Ghazvini M."/>
            <person name="Goffeau A."/>
            <person name="Gonzalez A."/>
            <person name="Grothues D."/>
            <person name="Guerreiro P."/>
            <person name="Hegemann J.H."/>
            <person name="Hewitt N."/>
            <person name="Hilger F."/>
            <person name="Hollenberg C.P."/>
            <person name="Horaitis O."/>
            <person name="Indge K.J."/>
            <person name="Jacquier A."/>
            <person name="James C.M."/>
            <person name="Jauniaux J.-C."/>
            <person name="Jimenez A."/>
            <person name="Keuchel H."/>
            <person name="Kirchrath L."/>
            <person name="Kleine K."/>
            <person name="Koetter P."/>
            <person name="Legrain P."/>
            <person name="Liebl S."/>
            <person name="Louis E.J."/>
            <person name="Maia e Silva A."/>
            <person name="Marck C."/>
            <person name="Monnier A.-L."/>
            <person name="Moestl D."/>
            <person name="Mueller S."/>
            <person name="Obermaier B."/>
            <person name="Oliver S.G."/>
            <person name="Pallier C."/>
            <person name="Pascolo S."/>
            <person name="Pfeiffer F."/>
            <person name="Philippsen P."/>
            <person name="Planta R.J."/>
            <person name="Pohl F.M."/>
            <person name="Pohl T.M."/>
            <person name="Poehlmann R."/>
            <person name="Portetelle D."/>
            <person name="Purnelle B."/>
            <person name="Puzos V."/>
            <person name="Ramezani Rad M."/>
            <person name="Rasmussen S.W."/>
            <person name="Remacha M.A."/>
            <person name="Revuelta J.L."/>
            <person name="Richard G.-F."/>
            <person name="Rieger M."/>
            <person name="Rodrigues-Pousada C."/>
            <person name="Rose M."/>
            <person name="Rupp T."/>
            <person name="Santos M.A."/>
            <person name="Schwager C."/>
            <person name="Sensen C."/>
            <person name="Skala J."/>
            <person name="Soares H."/>
            <person name="Sor F."/>
            <person name="Stegemann J."/>
            <person name="Tettelin H."/>
            <person name="Thierry A."/>
            <person name="Tzermia M."/>
            <person name="Urrestarazu L.A."/>
            <person name="van Dyck L."/>
            <person name="van Vliet-Reedijk J.C."/>
            <person name="Valens M."/>
            <person name="Vandenbol M."/>
            <person name="Vilela C."/>
            <person name="Vissers S."/>
            <person name="von Wettstein D."/>
            <person name="Voss H."/>
            <person name="Wiemann S."/>
            <person name="Xu G."/>
            <person name="Zimmermann J."/>
            <person name="Haasemann M."/>
            <person name="Becker I."/>
            <person name="Mewes H.-W."/>
        </authorList>
    </citation>
    <scope>NUCLEOTIDE SEQUENCE [LARGE SCALE GENOMIC DNA]</scope>
    <source>
        <strain>ATCC 204508 / S288c</strain>
    </source>
</reference>
<reference key="3">
    <citation type="journal article" date="2014" name="G3 (Bethesda)">
        <title>The reference genome sequence of Saccharomyces cerevisiae: Then and now.</title>
        <authorList>
            <person name="Engel S.R."/>
            <person name="Dietrich F.S."/>
            <person name="Fisk D.G."/>
            <person name="Binkley G."/>
            <person name="Balakrishnan R."/>
            <person name="Costanzo M.C."/>
            <person name="Dwight S.S."/>
            <person name="Hitz B.C."/>
            <person name="Karra K."/>
            <person name="Nash R.S."/>
            <person name="Weng S."/>
            <person name="Wong E.D."/>
            <person name="Lloyd P."/>
            <person name="Skrzypek M.S."/>
            <person name="Miyasato S.R."/>
            <person name="Simison M."/>
            <person name="Cherry J.M."/>
        </authorList>
    </citation>
    <scope>GENOME REANNOTATION</scope>
    <scope>SEQUENCE REVISION TO 1009</scope>
    <source>
        <strain>ATCC 204508 / S288c</strain>
    </source>
</reference>
<reference key="4">
    <citation type="journal article" date="2004" name="Mol. Biol. Cell">
        <title>The yeast elongator histone acetylase requires Sit4-dependent dephosphorylation for toxin-target capacity.</title>
        <authorList>
            <person name="Jablonowski D."/>
            <person name="Fichtner L."/>
            <person name="Stark M.J.R."/>
            <person name="Schaffrath R."/>
        </authorList>
    </citation>
    <scope>FUNCTION</scope>
</reference>
<reference key="5">
    <citation type="journal article" date="2004" name="Mol. Cell. Biol.">
        <title>TOR controls transcriptional and translational programs via Sap-Sit4 protein phosphatase signaling effectors.</title>
        <authorList>
            <person name="Rohde J.R."/>
            <person name="Campbell S."/>
            <person name="Zurita-Martinez S.A."/>
            <person name="Cutler N.S."/>
            <person name="Ashe M."/>
            <person name="Cardenas M.E."/>
        </authorList>
    </citation>
    <scope>FUNCTION</scope>
</reference>
<reference key="6">
    <citation type="journal article" date="2007" name="J. Proteome Res.">
        <title>Large-scale phosphorylation analysis of alpha-factor-arrested Saccharomyces cerevisiae.</title>
        <authorList>
            <person name="Li X."/>
            <person name="Gerber S.A."/>
            <person name="Rudner A.D."/>
            <person name="Beausoleil S.A."/>
            <person name="Haas W."/>
            <person name="Villen J."/>
            <person name="Elias J.E."/>
            <person name="Gygi S.P."/>
        </authorList>
    </citation>
    <scope>PHOSPHORYLATION [LARGE SCALE ANALYSIS] AT SER-774 AND SER-857</scope>
    <scope>IDENTIFICATION BY MASS SPECTROMETRY [LARGE SCALE ANALYSIS]</scope>
    <source>
        <strain>ADR376</strain>
    </source>
</reference>
<reference key="7">
    <citation type="journal article" date="2008" name="Mol. Cell. Proteomics">
        <title>A multidimensional chromatography technology for in-depth phosphoproteome analysis.</title>
        <authorList>
            <person name="Albuquerque C.P."/>
            <person name="Smolka M.B."/>
            <person name="Payne S.H."/>
            <person name="Bafna V."/>
            <person name="Eng J."/>
            <person name="Zhou H."/>
        </authorList>
    </citation>
    <scope>PHOSPHORYLATION [LARGE SCALE ANALYSIS] AT SER-774</scope>
    <scope>IDENTIFICATION BY MASS SPECTROMETRY [LARGE SCALE ANALYSIS]</scope>
</reference>
<reference key="8">
    <citation type="journal article" date="2009" name="Science">
        <title>Global analysis of Cdk1 substrate phosphorylation sites provides insights into evolution.</title>
        <authorList>
            <person name="Holt L.J."/>
            <person name="Tuch B.B."/>
            <person name="Villen J."/>
            <person name="Johnson A.D."/>
            <person name="Gygi S.P."/>
            <person name="Morgan D.O."/>
        </authorList>
    </citation>
    <scope>PHOSPHORYLATION [LARGE SCALE ANALYSIS] AT SER-774; SER-857; SER-862; SER-892; THR-990 AND SER-991</scope>
    <scope>IDENTIFICATION BY MASS SPECTROMETRY [LARGE SCALE ANALYSIS]</scope>
</reference>